<reference key="1">
    <citation type="journal article" date="2006" name="J. Bacteriol.">
        <title>Complete genome sequence of Yersinia pestis strains Antiqua and Nepal516: evidence of gene reduction in an emerging pathogen.</title>
        <authorList>
            <person name="Chain P.S.G."/>
            <person name="Hu P."/>
            <person name="Malfatti S.A."/>
            <person name="Radnedge L."/>
            <person name="Larimer F."/>
            <person name="Vergez L.M."/>
            <person name="Worsham P."/>
            <person name="Chu M.C."/>
            <person name="Andersen G.L."/>
        </authorList>
    </citation>
    <scope>NUCLEOTIDE SEQUENCE [LARGE SCALE GENOMIC DNA]</scope>
    <source>
        <strain>Antiqua</strain>
    </source>
</reference>
<evidence type="ECO:0000255" key="1">
    <source>
        <dbReference type="HAMAP-Rule" id="MF_00387"/>
    </source>
</evidence>
<protein>
    <recommendedName>
        <fullName evidence="1">Acyl-[acyl-carrier-protein]--UDP-N-acetylglucosamine O-acyltransferase</fullName>
        <shortName evidence="1">UDP-N-acetylglucosamine acyltransferase</shortName>
        <ecNumber evidence="1">2.3.1.129</ecNumber>
    </recommendedName>
</protein>
<sequence length="262" mass="28117">MIDKTAFIHPSSIVEEGAIIGAGVYIGPFCIVGSQVEIGAGTELKSHVVVNGITKIGCDNQIYQFASIGEANQDLKYAGEPTRVEVGDRNRIRESVTIHRGTTQGGGVTKVGCDNLLMVNTHVAHDCVIGNRCILANNAALGGHVEIDDYAIIGGMTAIHQFCVIGAHVMVGGCSGITQDVPPFVIAQGNHATPFGINIEGLKRRGFDKESLHAIRSAYKLLYRSGRTLDEVKPEIAELAEQYPVVKAFNDFFARSTRGIIR</sequence>
<name>LPXA_YERPA</name>
<feature type="chain" id="PRO_0000302614" description="Acyl-[acyl-carrier-protein]--UDP-N-acetylglucosamine O-acyltransferase">
    <location>
        <begin position="1"/>
        <end position="262"/>
    </location>
</feature>
<organism>
    <name type="scientific">Yersinia pestis bv. Antiqua (strain Antiqua)</name>
    <dbReference type="NCBI Taxonomy" id="360102"/>
    <lineage>
        <taxon>Bacteria</taxon>
        <taxon>Pseudomonadati</taxon>
        <taxon>Pseudomonadota</taxon>
        <taxon>Gammaproteobacteria</taxon>
        <taxon>Enterobacterales</taxon>
        <taxon>Yersiniaceae</taxon>
        <taxon>Yersinia</taxon>
    </lineage>
</organism>
<accession>Q1CAM2</accession>
<gene>
    <name evidence="1" type="primary">lpxA</name>
    <name type="ordered locus">YPA_0532</name>
</gene>
<keyword id="KW-0012">Acyltransferase</keyword>
<keyword id="KW-0963">Cytoplasm</keyword>
<keyword id="KW-0441">Lipid A biosynthesis</keyword>
<keyword id="KW-0444">Lipid biosynthesis</keyword>
<keyword id="KW-0443">Lipid metabolism</keyword>
<keyword id="KW-0677">Repeat</keyword>
<keyword id="KW-0808">Transferase</keyword>
<dbReference type="EC" id="2.3.1.129" evidence="1"/>
<dbReference type="EMBL" id="CP000308">
    <property type="protein sequence ID" value="ABG12500.1"/>
    <property type="molecule type" value="Genomic_DNA"/>
</dbReference>
<dbReference type="RefSeq" id="WP_002212143.1">
    <property type="nucleotide sequence ID" value="NZ_CP009906.1"/>
</dbReference>
<dbReference type="SMR" id="Q1CAM2"/>
<dbReference type="GeneID" id="57977505"/>
<dbReference type="KEGG" id="ypa:YPA_0532"/>
<dbReference type="UniPathway" id="UPA00359">
    <property type="reaction ID" value="UER00477"/>
</dbReference>
<dbReference type="Proteomes" id="UP000001971">
    <property type="component" value="Chromosome"/>
</dbReference>
<dbReference type="GO" id="GO:0005737">
    <property type="term" value="C:cytoplasm"/>
    <property type="evidence" value="ECO:0007669"/>
    <property type="project" value="UniProtKB-SubCell"/>
</dbReference>
<dbReference type="GO" id="GO:0016020">
    <property type="term" value="C:membrane"/>
    <property type="evidence" value="ECO:0007669"/>
    <property type="project" value="GOC"/>
</dbReference>
<dbReference type="GO" id="GO:0008780">
    <property type="term" value="F:acyl-[acyl-carrier-protein]-UDP-N-acetylglucosamine O-acyltransferase activity"/>
    <property type="evidence" value="ECO:0007669"/>
    <property type="project" value="UniProtKB-UniRule"/>
</dbReference>
<dbReference type="GO" id="GO:0009245">
    <property type="term" value="P:lipid A biosynthetic process"/>
    <property type="evidence" value="ECO:0007669"/>
    <property type="project" value="UniProtKB-UniRule"/>
</dbReference>
<dbReference type="CDD" id="cd03351">
    <property type="entry name" value="LbH_UDP-GlcNAc_AT"/>
    <property type="match status" value="1"/>
</dbReference>
<dbReference type="FunFam" id="1.20.1180.10:FF:000001">
    <property type="entry name" value="Acyl-[acyl-carrier-protein]--UDP-N-acetylglucosamine O-acyltransferase"/>
    <property type="match status" value="1"/>
</dbReference>
<dbReference type="FunFam" id="2.160.10.10:FF:000003">
    <property type="entry name" value="Acyl-[acyl-carrier-protein]--UDP-N-acetylglucosamine O-acyltransferase"/>
    <property type="match status" value="1"/>
</dbReference>
<dbReference type="Gene3D" id="2.160.10.10">
    <property type="entry name" value="Hexapeptide repeat proteins"/>
    <property type="match status" value="1"/>
</dbReference>
<dbReference type="Gene3D" id="1.20.1180.10">
    <property type="entry name" value="Udp N-acetylglucosamine O-acyltransferase, C-terminal domain"/>
    <property type="match status" value="1"/>
</dbReference>
<dbReference type="HAMAP" id="MF_00387">
    <property type="entry name" value="LpxA"/>
    <property type="match status" value="1"/>
</dbReference>
<dbReference type="InterPro" id="IPR029098">
    <property type="entry name" value="Acetyltransf_C"/>
</dbReference>
<dbReference type="InterPro" id="IPR037157">
    <property type="entry name" value="Acetyltransf_C_sf"/>
</dbReference>
<dbReference type="InterPro" id="IPR001451">
    <property type="entry name" value="Hexapep"/>
</dbReference>
<dbReference type="InterPro" id="IPR018357">
    <property type="entry name" value="Hexapep_transf_CS"/>
</dbReference>
<dbReference type="InterPro" id="IPR010137">
    <property type="entry name" value="Lipid_A_LpxA"/>
</dbReference>
<dbReference type="InterPro" id="IPR011004">
    <property type="entry name" value="Trimer_LpxA-like_sf"/>
</dbReference>
<dbReference type="NCBIfam" id="TIGR01852">
    <property type="entry name" value="lipid_A_lpxA"/>
    <property type="match status" value="1"/>
</dbReference>
<dbReference type="NCBIfam" id="NF003657">
    <property type="entry name" value="PRK05289.1"/>
    <property type="match status" value="1"/>
</dbReference>
<dbReference type="PANTHER" id="PTHR43480">
    <property type="entry name" value="ACYL-[ACYL-CARRIER-PROTEIN]--UDP-N-ACETYLGLUCOSAMINE O-ACYLTRANSFERASE"/>
    <property type="match status" value="1"/>
</dbReference>
<dbReference type="PANTHER" id="PTHR43480:SF1">
    <property type="entry name" value="ACYL-[ACYL-CARRIER-PROTEIN]--UDP-N-ACETYLGLUCOSAMINE O-ACYLTRANSFERASE, MITOCHONDRIAL-RELATED"/>
    <property type="match status" value="1"/>
</dbReference>
<dbReference type="Pfam" id="PF13720">
    <property type="entry name" value="Acetyltransf_11"/>
    <property type="match status" value="1"/>
</dbReference>
<dbReference type="Pfam" id="PF00132">
    <property type="entry name" value="Hexapep"/>
    <property type="match status" value="2"/>
</dbReference>
<dbReference type="PIRSF" id="PIRSF000456">
    <property type="entry name" value="UDP-GlcNAc_acltr"/>
    <property type="match status" value="1"/>
</dbReference>
<dbReference type="SUPFAM" id="SSF51161">
    <property type="entry name" value="Trimeric LpxA-like enzymes"/>
    <property type="match status" value="1"/>
</dbReference>
<dbReference type="PROSITE" id="PS00101">
    <property type="entry name" value="HEXAPEP_TRANSFERASES"/>
    <property type="match status" value="2"/>
</dbReference>
<proteinExistence type="inferred from homology"/>
<comment type="function">
    <text evidence="1">Involved in the biosynthesis of lipid A, a phosphorylated glycolipid that anchors the lipopolysaccharide to the outer membrane of the cell.</text>
</comment>
<comment type="catalytic activity">
    <reaction evidence="1">
        <text>a (3R)-hydroxyacyl-[ACP] + UDP-N-acetyl-alpha-D-glucosamine = a UDP-3-O-[(3R)-3-hydroxyacyl]-N-acetyl-alpha-D-glucosamine + holo-[ACP]</text>
        <dbReference type="Rhea" id="RHEA:67812"/>
        <dbReference type="Rhea" id="RHEA-COMP:9685"/>
        <dbReference type="Rhea" id="RHEA-COMP:9945"/>
        <dbReference type="ChEBI" id="CHEBI:57705"/>
        <dbReference type="ChEBI" id="CHEBI:64479"/>
        <dbReference type="ChEBI" id="CHEBI:78827"/>
        <dbReference type="ChEBI" id="CHEBI:173225"/>
        <dbReference type="EC" id="2.3.1.129"/>
    </reaction>
</comment>
<comment type="pathway">
    <text evidence="1">Glycolipid biosynthesis; lipid IV(A) biosynthesis; lipid IV(A) from (3R)-3-hydroxytetradecanoyl-[acyl-carrier-protein] and UDP-N-acetyl-alpha-D-glucosamine: step 1/6.</text>
</comment>
<comment type="subunit">
    <text evidence="1">Homotrimer.</text>
</comment>
<comment type="subcellular location">
    <subcellularLocation>
        <location evidence="1">Cytoplasm</location>
    </subcellularLocation>
</comment>
<comment type="similarity">
    <text evidence="1">Belongs to the transferase hexapeptide repeat family. LpxA subfamily.</text>
</comment>